<organism>
    <name type="scientific">Shewanella oneidensis (strain ATCC 700550 / JCM 31522 / CIP 106686 / LMG 19005 / NCIMB 14063 / MR-1)</name>
    <dbReference type="NCBI Taxonomy" id="211586"/>
    <lineage>
        <taxon>Bacteria</taxon>
        <taxon>Pseudomonadati</taxon>
        <taxon>Pseudomonadota</taxon>
        <taxon>Gammaproteobacteria</taxon>
        <taxon>Alteromonadales</taxon>
        <taxon>Shewanellaceae</taxon>
        <taxon>Shewanella</taxon>
    </lineage>
</organism>
<sequence length="318" mass="34718">MKFDPTSPSLNIMLANPRGFCAGVDRAISIVERALELFSPPIYVRHEVVHNRYVVQNLKDRGAVFVEELDQVPDNNIVIFSAHGVSQAVRAEAKARGLRVFDATCPLVTKVHLQVTRASRKGIECILIGHAGHPEVEGTMGQYDNPNGGVYLIESPADVETLEVRDPNNLCFVTQTTLSVDDTLDIISALLKRFPSIEGPRKDDICYATQNRQDAVRNLSADVDLLIVVGSKNSSNSNRLRELALKTGTQSYLVDTADDIDSSWFENITKVAVTAGASAPEVLVQQVVQAIAKLAPSVVTEVEGRKEDTVFAVPAELR</sequence>
<evidence type="ECO:0000255" key="1">
    <source>
        <dbReference type="HAMAP-Rule" id="MF_00191"/>
    </source>
</evidence>
<name>ISPH_SHEON</name>
<reference key="1">
    <citation type="journal article" date="2002" name="Nat. Biotechnol.">
        <title>Genome sequence of the dissimilatory metal ion-reducing bacterium Shewanella oneidensis.</title>
        <authorList>
            <person name="Heidelberg J.F."/>
            <person name="Paulsen I.T."/>
            <person name="Nelson K.E."/>
            <person name="Gaidos E.J."/>
            <person name="Nelson W.C."/>
            <person name="Read T.D."/>
            <person name="Eisen J.A."/>
            <person name="Seshadri R."/>
            <person name="Ward N.L."/>
            <person name="Methe B.A."/>
            <person name="Clayton R.A."/>
            <person name="Meyer T."/>
            <person name="Tsapin A."/>
            <person name="Scott J."/>
            <person name="Beanan M.J."/>
            <person name="Brinkac L.M."/>
            <person name="Daugherty S.C."/>
            <person name="DeBoy R.T."/>
            <person name="Dodson R.J."/>
            <person name="Durkin A.S."/>
            <person name="Haft D.H."/>
            <person name="Kolonay J.F."/>
            <person name="Madupu R."/>
            <person name="Peterson J.D."/>
            <person name="Umayam L.A."/>
            <person name="White O."/>
            <person name="Wolf A.M."/>
            <person name="Vamathevan J.J."/>
            <person name="Weidman J.F."/>
            <person name="Impraim M."/>
            <person name="Lee K."/>
            <person name="Berry K.J."/>
            <person name="Lee C."/>
            <person name="Mueller J."/>
            <person name="Khouri H.M."/>
            <person name="Gill J."/>
            <person name="Utterback T.R."/>
            <person name="McDonald L.A."/>
            <person name="Feldblyum T.V."/>
            <person name="Smith H.O."/>
            <person name="Venter J.C."/>
            <person name="Nealson K.H."/>
            <person name="Fraser C.M."/>
        </authorList>
    </citation>
    <scope>NUCLEOTIDE SEQUENCE [LARGE SCALE GENOMIC DNA]</scope>
    <source>
        <strain>ATCC 700550 / JCM 31522 / CIP 106686 / LMG 19005 / NCIMB 14063 / MR-1</strain>
    </source>
</reference>
<accession>Q8EBI7</accession>
<gene>
    <name evidence="1" type="primary">ispH</name>
    <name type="synonym">lytB</name>
    <name type="ordered locus">SO_3529</name>
</gene>
<dbReference type="EC" id="1.17.7.4" evidence="1"/>
<dbReference type="EMBL" id="AE014299">
    <property type="protein sequence ID" value="AAN56520.1"/>
    <property type="molecule type" value="Genomic_DNA"/>
</dbReference>
<dbReference type="RefSeq" id="NP_719076.1">
    <property type="nucleotide sequence ID" value="NC_004347.2"/>
</dbReference>
<dbReference type="RefSeq" id="WP_011073362.1">
    <property type="nucleotide sequence ID" value="NZ_CP053946.1"/>
</dbReference>
<dbReference type="SMR" id="Q8EBI7"/>
<dbReference type="STRING" id="211586.SO_3529"/>
<dbReference type="PaxDb" id="211586-SO_3529"/>
<dbReference type="DNASU" id="1171202"/>
<dbReference type="KEGG" id="son:SO_3529"/>
<dbReference type="PATRIC" id="fig|211586.12.peg.3425"/>
<dbReference type="eggNOG" id="COG0761">
    <property type="taxonomic scope" value="Bacteria"/>
</dbReference>
<dbReference type="HOGENOM" id="CLU_027486_1_0_6"/>
<dbReference type="OrthoDB" id="9804068at2"/>
<dbReference type="PhylomeDB" id="Q8EBI7"/>
<dbReference type="BioCyc" id="SONE211586:G1GMP-3291-MONOMER"/>
<dbReference type="UniPathway" id="UPA00056">
    <property type="reaction ID" value="UER00097"/>
</dbReference>
<dbReference type="UniPathway" id="UPA00059">
    <property type="reaction ID" value="UER00105"/>
</dbReference>
<dbReference type="Proteomes" id="UP000008186">
    <property type="component" value="Chromosome"/>
</dbReference>
<dbReference type="GO" id="GO:0005829">
    <property type="term" value="C:cytosol"/>
    <property type="evidence" value="ECO:0000318"/>
    <property type="project" value="GO_Central"/>
</dbReference>
<dbReference type="GO" id="GO:0051539">
    <property type="term" value="F:4 iron, 4 sulfur cluster binding"/>
    <property type="evidence" value="ECO:0007669"/>
    <property type="project" value="UniProtKB-UniRule"/>
</dbReference>
<dbReference type="GO" id="GO:0051745">
    <property type="term" value="F:4-hydroxy-3-methylbut-2-enyl diphosphate reductase activity"/>
    <property type="evidence" value="ECO:0000318"/>
    <property type="project" value="GO_Central"/>
</dbReference>
<dbReference type="GO" id="GO:0046872">
    <property type="term" value="F:metal ion binding"/>
    <property type="evidence" value="ECO:0007669"/>
    <property type="project" value="UniProtKB-KW"/>
</dbReference>
<dbReference type="GO" id="GO:0050992">
    <property type="term" value="P:dimethylallyl diphosphate biosynthetic process"/>
    <property type="evidence" value="ECO:0007669"/>
    <property type="project" value="UniProtKB-UniRule"/>
</dbReference>
<dbReference type="GO" id="GO:0019288">
    <property type="term" value="P:isopentenyl diphosphate biosynthetic process, methylerythritol 4-phosphate pathway"/>
    <property type="evidence" value="ECO:0000318"/>
    <property type="project" value="GO_Central"/>
</dbReference>
<dbReference type="GO" id="GO:0016114">
    <property type="term" value="P:terpenoid biosynthetic process"/>
    <property type="evidence" value="ECO:0007669"/>
    <property type="project" value="UniProtKB-UniRule"/>
</dbReference>
<dbReference type="CDD" id="cd13944">
    <property type="entry name" value="lytB_ispH"/>
    <property type="match status" value="1"/>
</dbReference>
<dbReference type="Gene3D" id="3.40.50.11270">
    <property type="match status" value="1"/>
</dbReference>
<dbReference type="Gene3D" id="3.40.1010.20">
    <property type="entry name" value="4-hydroxy-3-methylbut-2-enyl diphosphate reductase, catalytic domain"/>
    <property type="match status" value="2"/>
</dbReference>
<dbReference type="HAMAP" id="MF_00191">
    <property type="entry name" value="IspH"/>
    <property type="match status" value="1"/>
</dbReference>
<dbReference type="InterPro" id="IPR003451">
    <property type="entry name" value="LytB/IspH"/>
</dbReference>
<dbReference type="NCBIfam" id="TIGR00216">
    <property type="entry name" value="ispH_lytB"/>
    <property type="match status" value="1"/>
</dbReference>
<dbReference type="NCBIfam" id="NF002188">
    <property type="entry name" value="PRK01045.1-2"/>
    <property type="match status" value="1"/>
</dbReference>
<dbReference type="NCBIfam" id="NF002190">
    <property type="entry name" value="PRK01045.1-4"/>
    <property type="match status" value="1"/>
</dbReference>
<dbReference type="PANTHER" id="PTHR30426">
    <property type="entry name" value="4-HYDROXY-3-METHYLBUT-2-ENYL DIPHOSPHATE REDUCTASE"/>
    <property type="match status" value="1"/>
</dbReference>
<dbReference type="PANTHER" id="PTHR30426:SF0">
    <property type="entry name" value="4-HYDROXY-3-METHYLBUT-2-ENYL DIPHOSPHATE REDUCTASE"/>
    <property type="match status" value="1"/>
</dbReference>
<dbReference type="Pfam" id="PF02401">
    <property type="entry name" value="LYTB"/>
    <property type="match status" value="1"/>
</dbReference>
<protein>
    <recommendedName>
        <fullName evidence="1">4-hydroxy-3-methylbut-2-enyl diphosphate reductase</fullName>
        <shortName evidence="1">HMBPP reductase</shortName>
        <ecNumber evidence="1">1.17.7.4</ecNumber>
    </recommendedName>
</protein>
<feature type="chain" id="PRO_0000128871" description="4-hydroxy-3-methylbut-2-enyl diphosphate reductase">
    <location>
        <begin position="1"/>
        <end position="318"/>
    </location>
</feature>
<feature type="active site" description="Proton donor" evidence="1">
    <location>
        <position position="135"/>
    </location>
</feature>
<feature type="binding site" evidence="1">
    <location>
        <position position="21"/>
    </location>
    <ligand>
        <name>[4Fe-4S] cluster</name>
        <dbReference type="ChEBI" id="CHEBI:49883"/>
    </ligand>
</feature>
<feature type="binding site" evidence="1">
    <location>
        <position position="50"/>
    </location>
    <ligand>
        <name>(2E)-4-hydroxy-3-methylbut-2-enyl diphosphate</name>
        <dbReference type="ChEBI" id="CHEBI:128753"/>
    </ligand>
</feature>
<feature type="binding site" evidence="1">
    <location>
        <position position="50"/>
    </location>
    <ligand>
        <name>dimethylallyl diphosphate</name>
        <dbReference type="ChEBI" id="CHEBI:57623"/>
    </ligand>
</feature>
<feature type="binding site" evidence="1">
    <location>
        <position position="50"/>
    </location>
    <ligand>
        <name>isopentenyl diphosphate</name>
        <dbReference type="ChEBI" id="CHEBI:128769"/>
    </ligand>
</feature>
<feature type="binding site" evidence="1">
    <location>
        <position position="83"/>
    </location>
    <ligand>
        <name>(2E)-4-hydroxy-3-methylbut-2-enyl diphosphate</name>
        <dbReference type="ChEBI" id="CHEBI:128753"/>
    </ligand>
</feature>
<feature type="binding site" evidence="1">
    <location>
        <position position="83"/>
    </location>
    <ligand>
        <name>dimethylallyl diphosphate</name>
        <dbReference type="ChEBI" id="CHEBI:57623"/>
    </ligand>
</feature>
<feature type="binding site" evidence="1">
    <location>
        <position position="83"/>
    </location>
    <ligand>
        <name>isopentenyl diphosphate</name>
        <dbReference type="ChEBI" id="CHEBI:128769"/>
    </ligand>
</feature>
<feature type="binding site" evidence="1">
    <location>
        <position position="105"/>
    </location>
    <ligand>
        <name>[4Fe-4S] cluster</name>
        <dbReference type="ChEBI" id="CHEBI:49883"/>
    </ligand>
</feature>
<feature type="binding site" evidence="1">
    <location>
        <position position="133"/>
    </location>
    <ligand>
        <name>(2E)-4-hydroxy-3-methylbut-2-enyl diphosphate</name>
        <dbReference type="ChEBI" id="CHEBI:128753"/>
    </ligand>
</feature>
<feature type="binding site" evidence="1">
    <location>
        <position position="133"/>
    </location>
    <ligand>
        <name>dimethylallyl diphosphate</name>
        <dbReference type="ChEBI" id="CHEBI:57623"/>
    </ligand>
</feature>
<feature type="binding site" evidence="1">
    <location>
        <position position="133"/>
    </location>
    <ligand>
        <name>isopentenyl diphosphate</name>
        <dbReference type="ChEBI" id="CHEBI:128769"/>
    </ligand>
</feature>
<feature type="binding site" evidence="1">
    <location>
        <position position="176"/>
    </location>
    <ligand>
        <name>(2E)-4-hydroxy-3-methylbut-2-enyl diphosphate</name>
        <dbReference type="ChEBI" id="CHEBI:128753"/>
    </ligand>
</feature>
<feature type="binding site" evidence="1">
    <location>
        <position position="206"/>
    </location>
    <ligand>
        <name>[4Fe-4S] cluster</name>
        <dbReference type="ChEBI" id="CHEBI:49883"/>
    </ligand>
</feature>
<feature type="binding site" evidence="1">
    <location>
        <position position="234"/>
    </location>
    <ligand>
        <name>(2E)-4-hydroxy-3-methylbut-2-enyl diphosphate</name>
        <dbReference type="ChEBI" id="CHEBI:128753"/>
    </ligand>
</feature>
<feature type="binding site" evidence="1">
    <location>
        <position position="234"/>
    </location>
    <ligand>
        <name>dimethylallyl diphosphate</name>
        <dbReference type="ChEBI" id="CHEBI:57623"/>
    </ligand>
</feature>
<feature type="binding site" evidence="1">
    <location>
        <position position="234"/>
    </location>
    <ligand>
        <name>isopentenyl diphosphate</name>
        <dbReference type="ChEBI" id="CHEBI:128769"/>
    </ligand>
</feature>
<feature type="binding site" evidence="1">
    <location>
        <position position="235"/>
    </location>
    <ligand>
        <name>(2E)-4-hydroxy-3-methylbut-2-enyl diphosphate</name>
        <dbReference type="ChEBI" id="CHEBI:128753"/>
    </ligand>
</feature>
<feature type="binding site" evidence="1">
    <location>
        <position position="235"/>
    </location>
    <ligand>
        <name>dimethylallyl diphosphate</name>
        <dbReference type="ChEBI" id="CHEBI:57623"/>
    </ligand>
</feature>
<feature type="binding site" evidence="1">
    <location>
        <position position="235"/>
    </location>
    <ligand>
        <name>isopentenyl diphosphate</name>
        <dbReference type="ChEBI" id="CHEBI:128769"/>
    </ligand>
</feature>
<feature type="binding site" evidence="1">
    <location>
        <position position="236"/>
    </location>
    <ligand>
        <name>(2E)-4-hydroxy-3-methylbut-2-enyl diphosphate</name>
        <dbReference type="ChEBI" id="CHEBI:128753"/>
    </ligand>
</feature>
<feature type="binding site" evidence="1">
    <location>
        <position position="236"/>
    </location>
    <ligand>
        <name>dimethylallyl diphosphate</name>
        <dbReference type="ChEBI" id="CHEBI:57623"/>
    </ligand>
</feature>
<feature type="binding site" evidence="1">
    <location>
        <position position="236"/>
    </location>
    <ligand>
        <name>isopentenyl diphosphate</name>
        <dbReference type="ChEBI" id="CHEBI:128769"/>
    </ligand>
</feature>
<feature type="binding site" evidence="1">
    <location>
        <position position="278"/>
    </location>
    <ligand>
        <name>(2E)-4-hydroxy-3-methylbut-2-enyl diphosphate</name>
        <dbReference type="ChEBI" id="CHEBI:128753"/>
    </ligand>
</feature>
<feature type="binding site" evidence="1">
    <location>
        <position position="278"/>
    </location>
    <ligand>
        <name>dimethylallyl diphosphate</name>
        <dbReference type="ChEBI" id="CHEBI:57623"/>
    </ligand>
</feature>
<feature type="binding site" evidence="1">
    <location>
        <position position="278"/>
    </location>
    <ligand>
        <name>isopentenyl diphosphate</name>
        <dbReference type="ChEBI" id="CHEBI:128769"/>
    </ligand>
</feature>
<proteinExistence type="inferred from homology"/>
<keyword id="KW-0004">4Fe-4S</keyword>
<keyword id="KW-0408">Iron</keyword>
<keyword id="KW-0411">Iron-sulfur</keyword>
<keyword id="KW-0414">Isoprene biosynthesis</keyword>
<keyword id="KW-0479">Metal-binding</keyword>
<keyword id="KW-0560">Oxidoreductase</keyword>
<keyword id="KW-1185">Reference proteome</keyword>
<comment type="function">
    <text evidence="1">Catalyzes the conversion of 1-hydroxy-2-methyl-2-(E)-butenyl 4-diphosphate (HMBPP) into a mixture of isopentenyl diphosphate (IPP) and dimethylallyl diphosphate (DMAPP). Acts in the terminal step of the DOXP/MEP pathway for isoprenoid precursor biosynthesis.</text>
</comment>
<comment type="catalytic activity">
    <reaction evidence="1">
        <text>isopentenyl diphosphate + 2 oxidized [2Fe-2S]-[ferredoxin] + H2O = (2E)-4-hydroxy-3-methylbut-2-enyl diphosphate + 2 reduced [2Fe-2S]-[ferredoxin] + 2 H(+)</text>
        <dbReference type="Rhea" id="RHEA:24488"/>
        <dbReference type="Rhea" id="RHEA-COMP:10000"/>
        <dbReference type="Rhea" id="RHEA-COMP:10001"/>
        <dbReference type="ChEBI" id="CHEBI:15377"/>
        <dbReference type="ChEBI" id="CHEBI:15378"/>
        <dbReference type="ChEBI" id="CHEBI:33737"/>
        <dbReference type="ChEBI" id="CHEBI:33738"/>
        <dbReference type="ChEBI" id="CHEBI:128753"/>
        <dbReference type="ChEBI" id="CHEBI:128769"/>
        <dbReference type="EC" id="1.17.7.4"/>
    </reaction>
</comment>
<comment type="catalytic activity">
    <reaction evidence="1">
        <text>dimethylallyl diphosphate + 2 oxidized [2Fe-2S]-[ferredoxin] + H2O = (2E)-4-hydroxy-3-methylbut-2-enyl diphosphate + 2 reduced [2Fe-2S]-[ferredoxin] + 2 H(+)</text>
        <dbReference type="Rhea" id="RHEA:24825"/>
        <dbReference type="Rhea" id="RHEA-COMP:10000"/>
        <dbReference type="Rhea" id="RHEA-COMP:10001"/>
        <dbReference type="ChEBI" id="CHEBI:15377"/>
        <dbReference type="ChEBI" id="CHEBI:15378"/>
        <dbReference type="ChEBI" id="CHEBI:33737"/>
        <dbReference type="ChEBI" id="CHEBI:33738"/>
        <dbReference type="ChEBI" id="CHEBI:57623"/>
        <dbReference type="ChEBI" id="CHEBI:128753"/>
        <dbReference type="EC" id="1.17.7.4"/>
    </reaction>
</comment>
<comment type="cofactor">
    <cofactor evidence="1">
        <name>[4Fe-4S] cluster</name>
        <dbReference type="ChEBI" id="CHEBI:49883"/>
    </cofactor>
    <text evidence="1">Binds 1 [4Fe-4S] cluster per subunit.</text>
</comment>
<comment type="pathway">
    <text evidence="1">Isoprenoid biosynthesis; dimethylallyl diphosphate biosynthesis; dimethylallyl diphosphate from (2E)-4-hydroxy-3-methylbutenyl diphosphate: step 1/1.</text>
</comment>
<comment type="pathway">
    <text evidence="1">Isoprenoid biosynthesis; isopentenyl diphosphate biosynthesis via DXP pathway; isopentenyl diphosphate from 1-deoxy-D-xylulose 5-phosphate: step 6/6.</text>
</comment>
<comment type="similarity">
    <text evidence="1">Belongs to the IspH family.</text>
</comment>